<keyword id="KW-0963">Cytoplasm</keyword>
<keyword id="KW-0396">Initiation factor</keyword>
<keyword id="KW-0648">Protein biosynthesis</keyword>
<keyword id="KW-1185">Reference proteome</keyword>
<keyword id="KW-0694">RNA-binding</keyword>
<sequence>MSETINTAAQFPSFEKPTVQFNERGWGPCELPDTFKDVPYQPFSKNDRLGKICDWTSTSNNDKKYQNKYASSFGTGNQYSYYHEEDETTFHLVDTARVQKPPHQRGRFRNMRGRGGRGRNPRGGLNNHHHHGMTTLNGKNVKARDTRRGMGKKFGHRGPPPKMRESSVAVRADWASIEEMDFPRLIKLSLPNIKDGVDIATCGTLEYYDKTYDRINVKNEKPLQKIDRIVHTVTTTDDPVIRRLSKTVGNVFATDAILATIMCSTRSNYSWDIVIEKVGDKPPTDDDSSCNSPRNLAIEATFINHNFSQQVLKTGDQEAKFKFEEPNPFISEDEDIQVASVGYRYKKWELGSDIVLVARCEHDGVLQTPSGEPQFMSIKALNEWDSKLANGVEWRQKLDTQRGAVLANELRNNACKLAKWTVQAVLAGSDQLKLGYVSRINPRDHSRHVILGTQQFKPHEFATQINLSMDNAWGVLRCIIDLVMKQKDGKYLIMKDPNKPIIRLYDIPDNTFDSDDSDDGEGDDGEGFQQVYNYANNSNKI</sequence>
<proteinExistence type="inferred from homology"/>
<comment type="function">
    <text evidence="1">mRNA cap-binding component of the eukaryotic translation initiation factor 3 (eIF-3) complex, which is involved in protein synthesis of a specialized repertoire of mRNAs and, together with other initiation factors, stimulates binding of mRNA and methionyl-tRNAi to the 40S ribosome. The eIF-3 complex specifically targets and initiates translation of a subset of mRNAs involved in cell proliferation. In the eIF-3 complex, eif3d specifically recognizes and binds the 7-methylguanosine cap of a subset of mRNAs.</text>
</comment>
<comment type="subunit">
    <text evidence="1">Component of the eukaryotic translation initiation factor 3 (eIF-3) complex. The eIF-3 complex interacts with pix.</text>
</comment>
<comment type="subcellular location">
    <subcellularLocation>
        <location evidence="1">Cytoplasm</location>
    </subcellularLocation>
</comment>
<comment type="domain">
    <text evidence="1">The RNA gate region regulates mRNA cap recognition to prevent promiscuous mRNA-binding before assembly of eif3d into the full eukaryotic translation initiation factor 3 (eIF-3) complex.</text>
</comment>
<comment type="similarity">
    <text evidence="1">Belongs to the eIF-3 subunit D family.</text>
</comment>
<feature type="chain" id="PRO_0000364152" description="Eukaryotic translation initiation factor 3 subunit D-1">
    <location>
        <begin position="1"/>
        <end position="541"/>
    </location>
</feature>
<feature type="region of interest" description="Disordered" evidence="2">
    <location>
        <begin position="98"/>
        <end position="136"/>
    </location>
</feature>
<feature type="compositionally biased region" description="Basic residues" evidence="2">
    <location>
        <begin position="100"/>
        <end position="120"/>
    </location>
</feature>
<accession>B4GP93</accession>
<evidence type="ECO:0000255" key="1">
    <source>
        <dbReference type="HAMAP-Rule" id="MF_03003"/>
    </source>
</evidence>
<evidence type="ECO:0000256" key="2">
    <source>
        <dbReference type="SAM" id="MobiDB-lite"/>
    </source>
</evidence>
<protein>
    <recommendedName>
        <fullName evidence="1">Eukaryotic translation initiation factor 3 subunit D-1</fullName>
        <shortName evidence="1">eIF3d-1</shortName>
    </recommendedName>
    <alternativeName>
        <fullName evidence="1">Eukaryotic translation initiation factor 3 subunit 7-1</fullName>
    </alternativeName>
    <alternativeName>
        <fullName>Eukaryotic translation initiation factor 3 subunit p66</fullName>
    </alternativeName>
</protein>
<organism>
    <name type="scientific">Drosophila persimilis</name>
    <name type="common">Fruit fly</name>
    <dbReference type="NCBI Taxonomy" id="7234"/>
    <lineage>
        <taxon>Eukaryota</taxon>
        <taxon>Metazoa</taxon>
        <taxon>Ecdysozoa</taxon>
        <taxon>Arthropoda</taxon>
        <taxon>Hexapoda</taxon>
        <taxon>Insecta</taxon>
        <taxon>Pterygota</taxon>
        <taxon>Neoptera</taxon>
        <taxon>Endopterygota</taxon>
        <taxon>Diptera</taxon>
        <taxon>Brachycera</taxon>
        <taxon>Muscomorpha</taxon>
        <taxon>Ephydroidea</taxon>
        <taxon>Drosophilidae</taxon>
        <taxon>Drosophila</taxon>
        <taxon>Sophophora</taxon>
    </lineage>
</organism>
<gene>
    <name evidence="1" type="primary">eIF3d1</name>
    <name type="synonym">eIF-3p66</name>
    <name type="ORF">GL13650</name>
</gene>
<dbReference type="EMBL" id="CH479186">
    <property type="protein sequence ID" value="EDW38976.1"/>
    <property type="molecule type" value="Genomic_DNA"/>
</dbReference>
<dbReference type="RefSeq" id="XP_002020164.1">
    <property type="nucleotide sequence ID" value="XM_002020128.1"/>
</dbReference>
<dbReference type="SMR" id="B4GP93"/>
<dbReference type="STRING" id="7234.B4GP93"/>
<dbReference type="EnsemblMetazoa" id="FBtr0179265">
    <property type="protein sequence ID" value="FBpp0177757"/>
    <property type="gene ID" value="FBgn0151255"/>
</dbReference>
<dbReference type="eggNOG" id="KOG2479">
    <property type="taxonomic scope" value="Eukaryota"/>
</dbReference>
<dbReference type="HOGENOM" id="CLU_024521_2_0_1"/>
<dbReference type="OMA" id="FMDKRDN"/>
<dbReference type="OrthoDB" id="16538at2759"/>
<dbReference type="PhylomeDB" id="B4GP93"/>
<dbReference type="ChiTaRS" id="eIF-3p66">
    <property type="organism name" value="fly"/>
</dbReference>
<dbReference type="Proteomes" id="UP000008744">
    <property type="component" value="Unassembled WGS sequence"/>
</dbReference>
<dbReference type="GO" id="GO:0016282">
    <property type="term" value="C:eukaryotic 43S preinitiation complex"/>
    <property type="evidence" value="ECO:0007669"/>
    <property type="project" value="UniProtKB-UniRule"/>
</dbReference>
<dbReference type="GO" id="GO:0033290">
    <property type="term" value="C:eukaryotic 48S preinitiation complex"/>
    <property type="evidence" value="ECO:0007669"/>
    <property type="project" value="UniProtKB-UniRule"/>
</dbReference>
<dbReference type="GO" id="GO:0005852">
    <property type="term" value="C:eukaryotic translation initiation factor 3 complex"/>
    <property type="evidence" value="ECO:0000250"/>
    <property type="project" value="UniProtKB"/>
</dbReference>
<dbReference type="GO" id="GO:0005634">
    <property type="term" value="C:nucleus"/>
    <property type="evidence" value="ECO:0007669"/>
    <property type="project" value="EnsemblMetazoa"/>
</dbReference>
<dbReference type="GO" id="GO:0098808">
    <property type="term" value="F:mRNA cap binding"/>
    <property type="evidence" value="ECO:0007669"/>
    <property type="project" value="UniProtKB-UniRule"/>
</dbReference>
<dbReference type="GO" id="GO:0003743">
    <property type="term" value="F:translation initiation factor activity"/>
    <property type="evidence" value="ECO:0000250"/>
    <property type="project" value="UniProtKB"/>
</dbReference>
<dbReference type="GO" id="GO:0002191">
    <property type="term" value="P:cap-dependent translational initiation"/>
    <property type="evidence" value="ECO:0007669"/>
    <property type="project" value="UniProtKB-UniRule"/>
</dbReference>
<dbReference type="GO" id="GO:0001732">
    <property type="term" value="P:formation of cytoplasmic translation initiation complex"/>
    <property type="evidence" value="ECO:0007669"/>
    <property type="project" value="UniProtKB-UniRule"/>
</dbReference>
<dbReference type="GO" id="GO:0006446">
    <property type="term" value="P:regulation of translational initiation"/>
    <property type="evidence" value="ECO:0000250"/>
    <property type="project" value="UniProtKB"/>
</dbReference>
<dbReference type="HAMAP" id="MF_03003">
    <property type="entry name" value="eIF3d"/>
    <property type="match status" value="1"/>
</dbReference>
<dbReference type="InterPro" id="IPR007783">
    <property type="entry name" value="eIF3d"/>
</dbReference>
<dbReference type="PANTHER" id="PTHR12399">
    <property type="entry name" value="EUKARYOTIC TRANSLATION INITIATION FACTOR 3 SUBUNIT 7"/>
    <property type="match status" value="1"/>
</dbReference>
<dbReference type="PANTHER" id="PTHR12399:SF0">
    <property type="entry name" value="EUKARYOTIC TRANSLATION INITIATION FACTOR 3 SUBUNIT D"/>
    <property type="match status" value="1"/>
</dbReference>
<dbReference type="Pfam" id="PF05091">
    <property type="entry name" value="eIF-3_zeta"/>
    <property type="match status" value="2"/>
</dbReference>
<dbReference type="PIRSF" id="PIRSF016281">
    <property type="entry name" value="EIF-3_zeta"/>
    <property type="match status" value="1"/>
</dbReference>
<name>EI3D1_DROPE</name>
<reference key="1">
    <citation type="journal article" date="2007" name="Nature">
        <title>Evolution of genes and genomes on the Drosophila phylogeny.</title>
        <authorList>
            <consortium name="Drosophila 12 genomes consortium"/>
        </authorList>
    </citation>
    <scope>NUCLEOTIDE SEQUENCE [LARGE SCALE GENOMIC DNA]</scope>
    <source>
        <strain>MSH-3 / Tucson 14011-0111.49</strain>
    </source>
</reference>